<proteinExistence type="inferred from homology"/>
<sequence length="400" mass="41593">MLEFFSRLSLVTKIIIAIILGIGVALLFPTVTPYLSLFGELFIKALKSVAPILVFVLVLSSIANFQVGHSANLRPVLLLYVVGMLLAAFSAVIASLSFPSTLYLNTVSHNNLQAPGSLADILKNLLLSFIANPVQAISEANFIGILAWAIGLGLAMRHSSDTTKQVMQDVSHAVSAIIHKVIAFAPVGIFGLVAVTFADAGLATLESYAQLLAVLLGTMLFVALVINPILVGLTIRGNPYPLVFKCLKESGITAFFTRSSAANIPVNLDLAERLGVNPSTASVSIPLGATVNMAGAAVTITVLTLATVHTLGIHVDLATMIILSVVATISACGASGVAGGSLLLIPVACSLFGISSEIAMQVVAVGMIISVLQDSTETALNSSTDVLFTAAVDIRSRQNS</sequence>
<reference key="1">
    <citation type="journal article" date="2007" name="Genes Dev.">
        <title>New insights into Acinetobacter baumannii pathogenesis revealed by high-density pyrosequencing and transposon mutagenesis.</title>
        <authorList>
            <person name="Smith M.G."/>
            <person name="Gianoulis T.A."/>
            <person name="Pukatzki S."/>
            <person name="Mekalanos J.J."/>
            <person name="Ornston L.N."/>
            <person name="Gerstein M."/>
            <person name="Snyder M."/>
        </authorList>
    </citation>
    <scope>NUCLEOTIDE SEQUENCE [LARGE SCALE GENOMIC DNA]</scope>
    <source>
        <strain>ATCC 17978 / DSM 105126 / CIP 53.77 / LMG 1025 / NCDC KC755 / 5377</strain>
    </source>
</reference>
<accession>A3M4X1</accession>
<gene>
    <name evidence="1" type="primary">sstT</name>
    <name type="ordered locus">A1S_1538</name>
</gene>
<dbReference type="EMBL" id="CP000521">
    <property type="protein sequence ID" value="ABO11965.2"/>
    <property type="molecule type" value="Genomic_DNA"/>
</dbReference>
<dbReference type="RefSeq" id="WP_000889007.1">
    <property type="nucleotide sequence ID" value="NZ_CP053098.1"/>
</dbReference>
<dbReference type="SMR" id="A3M4X1"/>
<dbReference type="GeneID" id="92893766"/>
<dbReference type="KEGG" id="acb:A1S_1538"/>
<dbReference type="HOGENOM" id="CLU_044581_0_0_6"/>
<dbReference type="GO" id="GO:0005886">
    <property type="term" value="C:plasma membrane"/>
    <property type="evidence" value="ECO:0007669"/>
    <property type="project" value="UniProtKB-SubCell"/>
</dbReference>
<dbReference type="GO" id="GO:0015171">
    <property type="term" value="F:amino acid transmembrane transporter activity"/>
    <property type="evidence" value="ECO:0007669"/>
    <property type="project" value="UniProtKB-UniRule"/>
</dbReference>
<dbReference type="GO" id="GO:0015293">
    <property type="term" value="F:symporter activity"/>
    <property type="evidence" value="ECO:0007669"/>
    <property type="project" value="UniProtKB-UniRule"/>
</dbReference>
<dbReference type="GO" id="GO:0032329">
    <property type="term" value="P:serine transport"/>
    <property type="evidence" value="ECO:0007669"/>
    <property type="project" value="InterPro"/>
</dbReference>
<dbReference type="GO" id="GO:0015826">
    <property type="term" value="P:threonine transport"/>
    <property type="evidence" value="ECO:0007669"/>
    <property type="project" value="InterPro"/>
</dbReference>
<dbReference type="FunFam" id="1.10.3860.10:FF:000003">
    <property type="entry name" value="Serine/threonine transporter sstT"/>
    <property type="match status" value="1"/>
</dbReference>
<dbReference type="Gene3D" id="1.10.3860.10">
    <property type="entry name" value="Sodium:dicarboxylate symporter"/>
    <property type="match status" value="1"/>
</dbReference>
<dbReference type="HAMAP" id="MF_01582">
    <property type="entry name" value="Ser_Thr_transp_SstT"/>
    <property type="match status" value="1"/>
</dbReference>
<dbReference type="InterPro" id="IPR001991">
    <property type="entry name" value="Na-dicarboxylate_symporter"/>
</dbReference>
<dbReference type="InterPro" id="IPR036458">
    <property type="entry name" value="Na:dicarbo_symporter_sf"/>
</dbReference>
<dbReference type="InterPro" id="IPR023025">
    <property type="entry name" value="Ser_Thr_transp_SstT"/>
</dbReference>
<dbReference type="NCBIfam" id="NF010151">
    <property type="entry name" value="PRK13628.1"/>
    <property type="match status" value="1"/>
</dbReference>
<dbReference type="PANTHER" id="PTHR42865">
    <property type="entry name" value="PROTON/GLUTAMATE-ASPARTATE SYMPORTER"/>
    <property type="match status" value="1"/>
</dbReference>
<dbReference type="PANTHER" id="PTHR42865:SF7">
    <property type="entry name" value="PROTON_GLUTAMATE-ASPARTATE SYMPORTER"/>
    <property type="match status" value="1"/>
</dbReference>
<dbReference type="Pfam" id="PF00375">
    <property type="entry name" value="SDF"/>
    <property type="match status" value="1"/>
</dbReference>
<dbReference type="PRINTS" id="PR00173">
    <property type="entry name" value="EDTRNSPORT"/>
</dbReference>
<dbReference type="SUPFAM" id="SSF118215">
    <property type="entry name" value="Proton glutamate symport protein"/>
    <property type="match status" value="1"/>
</dbReference>
<name>SSTT_ACIBT</name>
<organism>
    <name type="scientific">Acinetobacter baumannii (strain ATCC 17978 / DSM 105126 / CIP 53.77 / LMG 1025 / NCDC KC755 / 5377)</name>
    <dbReference type="NCBI Taxonomy" id="400667"/>
    <lineage>
        <taxon>Bacteria</taxon>
        <taxon>Pseudomonadati</taxon>
        <taxon>Pseudomonadota</taxon>
        <taxon>Gammaproteobacteria</taxon>
        <taxon>Moraxellales</taxon>
        <taxon>Moraxellaceae</taxon>
        <taxon>Acinetobacter</taxon>
        <taxon>Acinetobacter calcoaceticus/baumannii complex</taxon>
    </lineage>
</organism>
<comment type="function">
    <text evidence="1">Involved in the import of serine and threonine into the cell, with the concomitant import of sodium (symport system).</text>
</comment>
<comment type="catalytic activity">
    <reaction evidence="1">
        <text>L-serine(in) + Na(+)(in) = L-serine(out) + Na(+)(out)</text>
        <dbReference type="Rhea" id="RHEA:29575"/>
        <dbReference type="ChEBI" id="CHEBI:29101"/>
        <dbReference type="ChEBI" id="CHEBI:33384"/>
    </reaction>
    <physiologicalReaction direction="right-to-left" evidence="1">
        <dbReference type="Rhea" id="RHEA:29577"/>
    </physiologicalReaction>
</comment>
<comment type="catalytic activity">
    <reaction evidence="1">
        <text>L-threonine(in) + Na(+)(in) = L-threonine(out) + Na(+)(out)</text>
        <dbReference type="Rhea" id="RHEA:69999"/>
        <dbReference type="ChEBI" id="CHEBI:29101"/>
        <dbReference type="ChEBI" id="CHEBI:57926"/>
    </reaction>
    <physiologicalReaction direction="right-to-left" evidence="1">
        <dbReference type="Rhea" id="RHEA:70001"/>
    </physiologicalReaction>
</comment>
<comment type="subcellular location">
    <subcellularLocation>
        <location evidence="1">Cell inner membrane</location>
        <topology evidence="1">Multi-pass membrane protein</topology>
    </subcellularLocation>
</comment>
<comment type="similarity">
    <text evidence="1">Belongs to the dicarboxylate/amino acid:cation symporter (DAACS) (TC 2.A.23) family.</text>
</comment>
<keyword id="KW-0029">Amino-acid transport</keyword>
<keyword id="KW-0997">Cell inner membrane</keyword>
<keyword id="KW-1003">Cell membrane</keyword>
<keyword id="KW-0472">Membrane</keyword>
<keyword id="KW-0769">Symport</keyword>
<keyword id="KW-0812">Transmembrane</keyword>
<keyword id="KW-1133">Transmembrane helix</keyword>
<keyword id="KW-0813">Transport</keyword>
<evidence type="ECO:0000255" key="1">
    <source>
        <dbReference type="HAMAP-Rule" id="MF_01582"/>
    </source>
</evidence>
<protein>
    <recommendedName>
        <fullName evidence="1">Serine/threonine transporter SstT</fullName>
    </recommendedName>
    <alternativeName>
        <fullName evidence="1">Na(+)/serine-threonine symporter</fullName>
    </alternativeName>
</protein>
<feature type="chain" id="PRO_0000309070" description="Serine/threonine transporter SstT">
    <location>
        <begin position="1"/>
        <end position="400"/>
    </location>
</feature>
<feature type="transmembrane region" description="Helical" evidence="1">
    <location>
        <begin position="14"/>
        <end position="34"/>
    </location>
</feature>
<feature type="transmembrane region" description="Helical" evidence="1">
    <location>
        <begin position="48"/>
        <end position="68"/>
    </location>
</feature>
<feature type="transmembrane region" description="Helical" evidence="1">
    <location>
        <begin position="76"/>
        <end position="96"/>
    </location>
</feature>
<feature type="transmembrane region" description="Helical" evidence="1">
    <location>
        <begin position="136"/>
        <end position="156"/>
    </location>
</feature>
<feature type="transmembrane region" description="Helical" evidence="1">
    <location>
        <begin position="177"/>
        <end position="197"/>
    </location>
</feature>
<feature type="transmembrane region" description="Helical" evidence="1">
    <location>
        <begin position="211"/>
        <end position="231"/>
    </location>
</feature>
<feature type="transmembrane region" description="Helical" evidence="1">
    <location>
        <begin position="285"/>
        <end position="305"/>
    </location>
</feature>
<feature type="transmembrane region" description="Helical" evidence="1">
    <location>
        <begin position="311"/>
        <end position="331"/>
    </location>
</feature>
<feature type="transmembrane region" description="Helical" evidence="1">
    <location>
        <begin position="349"/>
        <end position="371"/>
    </location>
</feature>